<reference key="1">
    <citation type="submission" date="2006-08" db="EMBL/GenBank/DDBJ databases">
        <authorList>
            <consortium name="NIH - Mammalian Gene Collection (MGC) project"/>
        </authorList>
    </citation>
    <scope>NUCLEOTIDE SEQUENCE [LARGE SCALE MRNA]</scope>
    <source>
        <strain>Hereford</strain>
        <tissue>Brain cortex</tissue>
    </source>
</reference>
<keyword id="KW-0106">Calcium</keyword>
<keyword id="KW-0107">Calcium channel</keyword>
<keyword id="KW-0109">Calcium transport</keyword>
<keyword id="KW-0407">Ion channel</keyword>
<keyword id="KW-0406">Ion transport</keyword>
<keyword id="KW-0472">Membrane</keyword>
<keyword id="KW-0597">Phosphoprotein</keyword>
<keyword id="KW-1185">Reference proteome</keyword>
<keyword id="KW-0812">Transmembrane</keyword>
<keyword id="KW-1133">Transmembrane helix</keyword>
<keyword id="KW-0813">Transport</keyword>
<keyword id="KW-0851">Voltage-gated channel</keyword>
<accession>Q0VD05</accession>
<comment type="function">
    <text evidence="1">Regulates the trafficking and gating properties of AMPA-selective glutamate receptors (AMPARs). Promotes their targeting to the cell membrane and synapses and modulates their gating properties by slowing their rates of activation, deactivation and desensitization. Does not show subunit-specific AMPA receptor regulation and regulates all AMPAR subunits. Thought to stabilize the calcium channel in an inactivated (closed) state.</text>
</comment>
<comment type="subunit">
    <text evidence="1 2">The L-type calcium channel is composed of five subunits: alpha-1, alpha-2/delta, beta and gamma. Acts as an auxiliary subunit for AMPA-selective glutamate receptors (AMPARs). Found in a complex with GRIA1, GRIA2, GRIA3, GRIA4, CNIH2, CNIH3, CACNG2, CACNG4, CACNG5, CACNG7 and CACNG8. Interacts with AP4M1 and GRIA1; associates GRIA1 with the adaptor protein complex 4 (AP-4) to target GRIA1 to the somatodendritic compartment of neurons.</text>
</comment>
<comment type="subcellular location">
    <subcellularLocation>
        <location evidence="3">Membrane</location>
        <topology evidence="3">Multi-pass membrane protein</topology>
    </subcellularLocation>
    <text evidence="2">Displays a somatodendritic localization and is excluded from axons in neurons.</text>
</comment>
<comment type="similarity">
    <text evidence="5">Belongs to the PMP-22/EMP/MP20 family. CACNG subfamily.</text>
</comment>
<organism>
    <name type="scientific">Bos taurus</name>
    <name type="common">Bovine</name>
    <dbReference type="NCBI Taxonomy" id="9913"/>
    <lineage>
        <taxon>Eukaryota</taxon>
        <taxon>Metazoa</taxon>
        <taxon>Chordata</taxon>
        <taxon>Craniata</taxon>
        <taxon>Vertebrata</taxon>
        <taxon>Euteleostomi</taxon>
        <taxon>Mammalia</taxon>
        <taxon>Eutheria</taxon>
        <taxon>Laurasiatheria</taxon>
        <taxon>Artiodactyla</taxon>
        <taxon>Ruminantia</taxon>
        <taxon>Pecora</taxon>
        <taxon>Bovidae</taxon>
        <taxon>Bovinae</taxon>
        <taxon>Bos</taxon>
    </lineage>
</organism>
<protein>
    <recommendedName>
        <fullName>Voltage-dependent calcium channel gamma-3 subunit</fullName>
    </recommendedName>
    <alternativeName>
        <fullName>Neuronal voltage-gated calcium channel gamma-3 subunit</fullName>
    </alternativeName>
    <alternativeName>
        <fullName>Transmembrane AMPAR regulatory protein gamma-3</fullName>
        <shortName>TARP gamma-3</shortName>
    </alternativeName>
</protein>
<evidence type="ECO:0000250" key="1">
    <source>
        <dbReference type="UniProtKB" id="Q8VHX0"/>
    </source>
</evidence>
<evidence type="ECO:0000250" key="2">
    <source>
        <dbReference type="UniProtKB" id="Q9JJV5"/>
    </source>
</evidence>
<evidence type="ECO:0000255" key="3"/>
<evidence type="ECO:0000256" key="4">
    <source>
        <dbReference type="SAM" id="MobiDB-lite"/>
    </source>
</evidence>
<evidence type="ECO:0000305" key="5"/>
<sequence>MRMCDRGVQMLITTVGAFAAFSLMTIAVGTDYWLYSRGVCRTKSTSDNETSRKNEEVMTHSGLWRTCCLEGAFRGVCKKIDHFPEDADYEQDTAEYLLRAVRASSVFPILSVTLLFFGGLCVAASEFHRSRHNVILSAGIFFVSAGLSNIIGIIVYISANAGDPGQRDSKKSYSYGWSFYFGAFSFIIAEIVGVVAVHIYIEKHQQLRAKSHSELLKKSTFARLPPYRYRFRRRSSSRSTEPRSRDLSPISKGFHTIPSTDISMFTLSRDPSKITMGTLLNSDRDHAFLQFHNSTPKEFKESLHNNPANRRTTPV</sequence>
<feature type="chain" id="PRO_0000273425" description="Voltage-dependent calcium channel gamma-3 subunit">
    <location>
        <begin position="1"/>
        <end position="315"/>
    </location>
</feature>
<feature type="transmembrane region" description="Helical" evidence="3">
    <location>
        <begin position="8"/>
        <end position="28"/>
    </location>
</feature>
<feature type="transmembrane region" description="Helical" evidence="3">
    <location>
        <begin position="104"/>
        <end position="124"/>
    </location>
</feature>
<feature type="transmembrane region" description="Helical" evidence="3">
    <location>
        <begin position="135"/>
        <end position="155"/>
    </location>
</feature>
<feature type="transmembrane region" description="Helical" evidence="3">
    <location>
        <begin position="181"/>
        <end position="201"/>
    </location>
</feature>
<feature type="region of interest" description="Disordered" evidence="4">
    <location>
        <begin position="232"/>
        <end position="252"/>
    </location>
</feature>
<feature type="modified residue" description="Phosphoserine" evidence="1">
    <location>
        <position position="248"/>
    </location>
</feature>
<name>CCG3_BOVIN</name>
<dbReference type="EMBL" id="BC119905">
    <property type="protein sequence ID" value="AAI19906.1"/>
    <property type="molecule type" value="mRNA"/>
</dbReference>
<dbReference type="RefSeq" id="NP_001071482.1">
    <property type="nucleotide sequence ID" value="NM_001078014.1"/>
</dbReference>
<dbReference type="SMR" id="Q0VD05"/>
<dbReference type="FunCoup" id="Q0VD05">
    <property type="interactions" value="579"/>
</dbReference>
<dbReference type="STRING" id="9913.ENSBTAP00000001841"/>
<dbReference type="PaxDb" id="9913-ENSBTAP00000001841"/>
<dbReference type="Ensembl" id="ENSBTAT00000001841.6">
    <property type="protein sequence ID" value="ENSBTAP00000001841.4"/>
    <property type="gene ID" value="ENSBTAG00000001404.6"/>
</dbReference>
<dbReference type="GeneID" id="538496"/>
<dbReference type="KEGG" id="bta:538496"/>
<dbReference type="CTD" id="10368"/>
<dbReference type="VEuPathDB" id="HostDB:ENSBTAG00000001404"/>
<dbReference type="VGNC" id="VGNC:26688">
    <property type="gene designation" value="CACNG3"/>
</dbReference>
<dbReference type="eggNOG" id="ENOG502QVF5">
    <property type="taxonomic scope" value="Eukaryota"/>
</dbReference>
<dbReference type="GeneTree" id="ENSGT01050000244893"/>
<dbReference type="HOGENOM" id="CLU_053704_0_1_1"/>
<dbReference type="InParanoid" id="Q0VD05"/>
<dbReference type="OMA" id="YEQDTSE"/>
<dbReference type="OrthoDB" id="9990458at2759"/>
<dbReference type="TreeFam" id="TF327980"/>
<dbReference type="Reactome" id="R-BTA-399719">
    <property type="pathway name" value="Trafficking of AMPA receptors"/>
</dbReference>
<dbReference type="Reactome" id="R-BTA-5682910">
    <property type="pathway name" value="LGI-ADAM interactions"/>
</dbReference>
<dbReference type="Proteomes" id="UP000009136">
    <property type="component" value="Chromosome 25"/>
</dbReference>
<dbReference type="Bgee" id="ENSBTAG00000001404">
    <property type="expression patterns" value="Expressed in occipital lobe and 13 other cell types or tissues"/>
</dbReference>
<dbReference type="GO" id="GO:0032281">
    <property type="term" value="C:AMPA glutamate receptor complex"/>
    <property type="evidence" value="ECO:0000250"/>
    <property type="project" value="UniProtKB"/>
</dbReference>
<dbReference type="GO" id="GO:0098978">
    <property type="term" value="C:glutamatergic synapse"/>
    <property type="evidence" value="ECO:0007669"/>
    <property type="project" value="Ensembl"/>
</dbReference>
<dbReference type="GO" id="GO:0098839">
    <property type="term" value="C:postsynaptic density membrane"/>
    <property type="evidence" value="ECO:0000318"/>
    <property type="project" value="GO_Central"/>
</dbReference>
<dbReference type="GO" id="GO:0098685">
    <property type="term" value="C:Schaffer collateral - CA1 synapse"/>
    <property type="evidence" value="ECO:0007669"/>
    <property type="project" value="Ensembl"/>
</dbReference>
<dbReference type="GO" id="GO:0036477">
    <property type="term" value="C:somatodendritic compartment"/>
    <property type="evidence" value="ECO:0000250"/>
    <property type="project" value="UniProtKB"/>
</dbReference>
<dbReference type="GO" id="GO:0016247">
    <property type="term" value="F:channel regulator activity"/>
    <property type="evidence" value="ECO:0000318"/>
    <property type="project" value="GO_Central"/>
</dbReference>
<dbReference type="GO" id="GO:0005245">
    <property type="term" value="F:voltage-gated calcium channel activity"/>
    <property type="evidence" value="ECO:0000318"/>
    <property type="project" value="GO_Central"/>
</dbReference>
<dbReference type="GO" id="GO:0099645">
    <property type="term" value="P:neurotransmitter receptor localization to postsynaptic specialization membrane"/>
    <property type="evidence" value="ECO:0007669"/>
    <property type="project" value="Ensembl"/>
</dbReference>
<dbReference type="GO" id="GO:0051968">
    <property type="term" value="P:positive regulation of synaptic transmission, glutamatergic"/>
    <property type="evidence" value="ECO:0000318"/>
    <property type="project" value="GO_Central"/>
</dbReference>
<dbReference type="GO" id="GO:0098970">
    <property type="term" value="P:postsynaptic neurotransmitter receptor diffusion trapping"/>
    <property type="evidence" value="ECO:0000318"/>
    <property type="project" value="GO_Central"/>
</dbReference>
<dbReference type="GO" id="GO:0008104">
    <property type="term" value="P:protein localization"/>
    <property type="evidence" value="ECO:0000250"/>
    <property type="project" value="UniProtKB"/>
</dbReference>
<dbReference type="GO" id="GO:0006605">
    <property type="term" value="P:protein targeting"/>
    <property type="evidence" value="ECO:0000250"/>
    <property type="project" value="UniProtKB"/>
</dbReference>
<dbReference type="GO" id="GO:2000311">
    <property type="term" value="P:regulation of AMPA receptor activity"/>
    <property type="evidence" value="ECO:0000250"/>
    <property type="project" value="UniProtKB"/>
</dbReference>
<dbReference type="GO" id="GO:0019226">
    <property type="term" value="P:transmission of nerve impulse"/>
    <property type="evidence" value="ECO:0000318"/>
    <property type="project" value="GO_Central"/>
</dbReference>
<dbReference type="FunFam" id="1.20.140.150:FF:000002">
    <property type="entry name" value="Voltage-dependent calcium channel gamma-2 subunit"/>
    <property type="match status" value="1"/>
</dbReference>
<dbReference type="Gene3D" id="1.20.140.150">
    <property type="match status" value="1"/>
</dbReference>
<dbReference type="InterPro" id="IPR051072">
    <property type="entry name" value="CACNG_subunit"/>
</dbReference>
<dbReference type="InterPro" id="IPR004031">
    <property type="entry name" value="PMP22/EMP/MP20/Claudin"/>
</dbReference>
<dbReference type="InterPro" id="IPR008368">
    <property type="entry name" value="VDCC_gsu"/>
</dbReference>
<dbReference type="PANTHER" id="PTHR12107">
    <property type="entry name" value="VOLTAGE-DEPENDENT CALCIUM CHANNEL GAMMA SUBUNIT"/>
    <property type="match status" value="1"/>
</dbReference>
<dbReference type="PANTHER" id="PTHR12107:SF5">
    <property type="entry name" value="VOLTAGE-DEPENDENT CALCIUM CHANNEL GAMMA-3 SUBUNIT"/>
    <property type="match status" value="1"/>
</dbReference>
<dbReference type="Pfam" id="PF00822">
    <property type="entry name" value="PMP22_Claudin"/>
    <property type="match status" value="1"/>
</dbReference>
<dbReference type="PRINTS" id="PR01792">
    <property type="entry name" value="VDCCGAMMA"/>
</dbReference>
<proteinExistence type="evidence at transcript level"/>
<gene>
    <name type="primary">CACNG3</name>
</gene>